<comment type="function">
    <text evidence="1">Catalyzes the reversible conversion of 2-phosphoglycerate (2-PG) into phosphoenolpyruvate (PEP). It is essential for the degradation of carbohydrates via glycolysis.</text>
</comment>
<comment type="catalytic activity">
    <reaction evidence="1">
        <text>(2R)-2-phosphoglycerate = phosphoenolpyruvate + H2O</text>
        <dbReference type="Rhea" id="RHEA:10164"/>
        <dbReference type="ChEBI" id="CHEBI:15377"/>
        <dbReference type="ChEBI" id="CHEBI:58289"/>
        <dbReference type="ChEBI" id="CHEBI:58702"/>
        <dbReference type="EC" id="4.2.1.11"/>
    </reaction>
</comment>
<comment type="cofactor">
    <cofactor evidence="1">
        <name>Mg(2+)</name>
        <dbReference type="ChEBI" id="CHEBI:18420"/>
    </cofactor>
    <text evidence="1">Binds a second Mg(2+) ion via substrate during catalysis.</text>
</comment>
<comment type="pathway">
    <text evidence="1">Carbohydrate degradation; glycolysis; pyruvate from D-glyceraldehyde 3-phosphate: step 4/5.</text>
</comment>
<comment type="subcellular location">
    <subcellularLocation>
        <location evidence="1">Cytoplasm</location>
    </subcellularLocation>
    <subcellularLocation>
        <location evidence="1">Secreted</location>
    </subcellularLocation>
    <subcellularLocation>
        <location evidence="1">Cell surface</location>
    </subcellularLocation>
    <text evidence="1">Fractions of enolase are present in both the cytoplasm and on the cell surface.</text>
</comment>
<comment type="similarity">
    <text evidence="1">Belongs to the enolase family.</text>
</comment>
<dbReference type="EC" id="4.2.1.11" evidence="1"/>
<dbReference type="EMBL" id="CP000872">
    <property type="protein sequence ID" value="ABX62200.1"/>
    <property type="molecule type" value="Genomic_DNA"/>
</dbReference>
<dbReference type="RefSeq" id="WP_002964261.1">
    <property type="nucleotide sequence ID" value="NC_010103.1"/>
</dbReference>
<dbReference type="SMR" id="A9M5E5"/>
<dbReference type="GeneID" id="97533615"/>
<dbReference type="KEGG" id="bcs:BCAN_A1151"/>
<dbReference type="HOGENOM" id="CLU_031223_2_1_5"/>
<dbReference type="PhylomeDB" id="A9M5E5"/>
<dbReference type="UniPathway" id="UPA00109">
    <property type="reaction ID" value="UER00187"/>
</dbReference>
<dbReference type="Proteomes" id="UP000001385">
    <property type="component" value="Chromosome I"/>
</dbReference>
<dbReference type="GO" id="GO:0009986">
    <property type="term" value="C:cell surface"/>
    <property type="evidence" value="ECO:0007669"/>
    <property type="project" value="UniProtKB-SubCell"/>
</dbReference>
<dbReference type="GO" id="GO:0005576">
    <property type="term" value="C:extracellular region"/>
    <property type="evidence" value="ECO:0007669"/>
    <property type="project" value="UniProtKB-SubCell"/>
</dbReference>
<dbReference type="GO" id="GO:0000015">
    <property type="term" value="C:phosphopyruvate hydratase complex"/>
    <property type="evidence" value="ECO:0007669"/>
    <property type="project" value="InterPro"/>
</dbReference>
<dbReference type="GO" id="GO:0000287">
    <property type="term" value="F:magnesium ion binding"/>
    <property type="evidence" value="ECO:0007669"/>
    <property type="project" value="UniProtKB-UniRule"/>
</dbReference>
<dbReference type="GO" id="GO:0004634">
    <property type="term" value="F:phosphopyruvate hydratase activity"/>
    <property type="evidence" value="ECO:0007669"/>
    <property type="project" value="UniProtKB-UniRule"/>
</dbReference>
<dbReference type="GO" id="GO:0006096">
    <property type="term" value="P:glycolytic process"/>
    <property type="evidence" value="ECO:0007669"/>
    <property type="project" value="UniProtKB-UniRule"/>
</dbReference>
<dbReference type="CDD" id="cd03313">
    <property type="entry name" value="enolase"/>
    <property type="match status" value="1"/>
</dbReference>
<dbReference type="FunFam" id="3.20.20.120:FF:000001">
    <property type="entry name" value="Enolase"/>
    <property type="match status" value="1"/>
</dbReference>
<dbReference type="FunFam" id="3.30.390.10:FF:000001">
    <property type="entry name" value="Enolase"/>
    <property type="match status" value="1"/>
</dbReference>
<dbReference type="Gene3D" id="3.20.20.120">
    <property type="entry name" value="Enolase-like C-terminal domain"/>
    <property type="match status" value="1"/>
</dbReference>
<dbReference type="Gene3D" id="3.30.390.10">
    <property type="entry name" value="Enolase-like, N-terminal domain"/>
    <property type="match status" value="1"/>
</dbReference>
<dbReference type="HAMAP" id="MF_00318">
    <property type="entry name" value="Enolase"/>
    <property type="match status" value="1"/>
</dbReference>
<dbReference type="InterPro" id="IPR000941">
    <property type="entry name" value="Enolase"/>
</dbReference>
<dbReference type="InterPro" id="IPR036849">
    <property type="entry name" value="Enolase-like_C_sf"/>
</dbReference>
<dbReference type="InterPro" id="IPR029017">
    <property type="entry name" value="Enolase-like_N"/>
</dbReference>
<dbReference type="InterPro" id="IPR020810">
    <property type="entry name" value="Enolase_C"/>
</dbReference>
<dbReference type="InterPro" id="IPR020809">
    <property type="entry name" value="Enolase_CS"/>
</dbReference>
<dbReference type="InterPro" id="IPR020811">
    <property type="entry name" value="Enolase_N"/>
</dbReference>
<dbReference type="NCBIfam" id="TIGR01060">
    <property type="entry name" value="eno"/>
    <property type="match status" value="1"/>
</dbReference>
<dbReference type="PANTHER" id="PTHR11902">
    <property type="entry name" value="ENOLASE"/>
    <property type="match status" value="1"/>
</dbReference>
<dbReference type="PANTHER" id="PTHR11902:SF1">
    <property type="entry name" value="ENOLASE"/>
    <property type="match status" value="1"/>
</dbReference>
<dbReference type="Pfam" id="PF00113">
    <property type="entry name" value="Enolase_C"/>
    <property type="match status" value="1"/>
</dbReference>
<dbReference type="Pfam" id="PF03952">
    <property type="entry name" value="Enolase_N"/>
    <property type="match status" value="1"/>
</dbReference>
<dbReference type="PIRSF" id="PIRSF001400">
    <property type="entry name" value="Enolase"/>
    <property type="match status" value="1"/>
</dbReference>
<dbReference type="PRINTS" id="PR00148">
    <property type="entry name" value="ENOLASE"/>
</dbReference>
<dbReference type="SFLD" id="SFLDF00002">
    <property type="entry name" value="enolase"/>
    <property type="match status" value="1"/>
</dbReference>
<dbReference type="SFLD" id="SFLDG00178">
    <property type="entry name" value="enolase"/>
    <property type="match status" value="1"/>
</dbReference>
<dbReference type="SMART" id="SM01192">
    <property type="entry name" value="Enolase_C"/>
    <property type="match status" value="1"/>
</dbReference>
<dbReference type="SMART" id="SM01193">
    <property type="entry name" value="Enolase_N"/>
    <property type="match status" value="1"/>
</dbReference>
<dbReference type="SUPFAM" id="SSF51604">
    <property type="entry name" value="Enolase C-terminal domain-like"/>
    <property type="match status" value="1"/>
</dbReference>
<dbReference type="SUPFAM" id="SSF54826">
    <property type="entry name" value="Enolase N-terminal domain-like"/>
    <property type="match status" value="1"/>
</dbReference>
<dbReference type="PROSITE" id="PS00164">
    <property type="entry name" value="ENOLASE"/>
    <property type="match status" value="1"/>
</dbReference>
<reference key="1">
    <citation type="submission" date="2007-10" db="EMBL/GenBank/DDBJ databases">
        <title>Brucella canis ATCC 23365 whole genome shotgun sequencing project.</title>
        <authorList>
            <person name="Setubal J.C."/>
            <person name="Bowns C."/>
            <person name="Boyle S."/>
            <person name="Crasta O.R."/>
            <person name="Czar M.J."/>
            <person name="Dharmanolla C."/>
            <person name="Gillespie J.J."/>
            <person name="Kenyon R.W."/>
            <person name="Lu J."/>
            <person name="Mane S."/>
            <person name="Mohapatra S."/>
            <person name="Nagrani S."/>
            <person name="Purkayastha A."/>
            <person name="Rajasimha H.K."/>
            <person name="Shallom J.M."/>
            <person name="Shallom S."/>
            <person name="Shukla M."/>
            <person name="Snyder E.E."/>
            <person name="Sobral B.W."/>
            <person name="Wattam A.R."/>
            <person name="Will R."/>
            <person name="Williams K."/>
            <person name="Yoo H."/>
            <person name="Bruce D."/>
            <person name="Detter C."/>
            <person name="Munk C."/>
            <person name="Brettin T.S."/>
        </authorList>
    </citation>
    <scope>NUCLEOTIDE SEQUENCE [LARGE SCALE GENOMIC DNA]</scope>
    <source>
        <strain>ATCC 23365 / NCTC 10854 / RM-666</strain>
    </source>
</reference>
<evidence type="ECO:0000255" key="1">
    <source>
        <dbReference type="HAMAP-Rule" id="MF_00318"/>
    </source>
</evidence>
<name>ENO_BRUC2</name>
<keyword id="KW-0963">Cytoplasm</keyword>
<keyword id="KW-0324">Glycolysis</keyword>
<keyword id="KW-0456">Lyase</keyword>
<keyword id="KW-0460">Magnesium</keyword>
<keyword id="KW-0479">Metal-binding</keyword>
<keyword id="KW-1185">Reference proteome</keyword>
<keyword id="KW-0964">Secreted</keyword>
<gene>
    <name evidence="1" type="primary">eno</name>
    <name type="ordered locus">BCAN_A1151</name>
</gene>
<organism>
    <name type="scientific">Brucella canis (strain ATCC 23365 / NCTC 10854 / RM-666)</name>
    <dbReference type="NCBI Taxonomy" id="483179"/>
    <lineage>
        <taxon>Bacteria</taxon>
        <taxon>Pseudomonadati</taxon>
        <taxon>Pseudomonadota</taxon>
        <taxon>Alphaproteobacteria</taxon>
        <taxon>Hyphomicrobiales</taxon>
        <taxon>Brucellaceae</taxon>
        <taxon>Brucella/Ochrobactrum group</taxon>
        <taxon>Brucella</taxon>
    </lineage>
</organism>
<protein>
    <recommendedName>
        <fullName evidence="1">Enolase</fullName>
        <ecNumber evidence="1">4.2.1.11</ecNumber>
    </recommendedName>
    <alternativeName>
        <fullName evidence="1">2-phospho-D-glycerate hydro-lyase</fullName>
    </alternativeName>
    <alternativeName>
        <fullName evidence="1">2-phosphoglycerate dehydratase</fullName>
    </alternativeName>
</protein>
<accession>A9M5E5</accession>
<proteinExistence type="inferred from homology"/>
<sequence length="425" mass="45261">MTAIIDIVGREILDSRGNPTVEVDVVLEDGSFGRAAVPSGASTGAHEAVELRDGGSRYLGKGVEKAVEVVNGKIFDAIAGMDAESQLLIDQTLIDLDGSANKGNLGANAILGVSLAVAKAAAQASGLPLYRYVGGTNAHVLPVPMMNIINGGAHADNPIDFQEFMILPVGATSIREAVRYGSEVFHTLKKRLKDAGHNTNVGDEGGFAPNLKNAQAALDFIMESIEKAGFKPGEDIALGLDCAATEFFKDGNYVYEGERKTRDPKAQAKYLAKLASDYPIVTIEDGMAEDDWEGWKYLTDLIGNKCQLVGDDLFVTNSARLRDGIRLGVANSILVKVNQIGSLSETLDAVETAHKAGYTAVMSHRSGETEDSTIADLAVATNCGQIKTGSLARSDRTAKYNQLIRIEEELGKQARYAGRSALKLL</sequence>
<feature type="chain" id="PRO_1000079123" description="Enolase">
    <location>
        <begin position="1"/>
        <end position="425"/>
    </location>
</feature>
<feature type="active site" description="Proton donor" evidence="1">
    <location>
        <position position="204"/>
    </location>
</feature>
<feature type="active site" description="Proton acceptor" evidence="1">
    <location>
        <position position="336"/>
    </location>
</feature>
<feature type="binding site" evidence="1">
    <location>
        <position position="162"/>
    </location>
    <ligand>
        <name>(2R)-2-phosphoglycerate</name>
        <dbReference type="ChEBI" id="CHEBI:58289"/>
    </ligand>
</feature>
<feature type="binding site" evidence="1">
    <location>
        <position position="241"/>
    </location>
    <ligand>
        <name>Mg(2+)</name>
        <dbReference type="ChEBI" id="CHEBI:18420"/>
    </ligand>
</feature>
<feature type="binding site" evidence="1">
    <location>
        <position position="284"/>
    </location>
    <ligand>
        <name>Mg(2+)</name>
        <dbReference type="ChEBI" id="CHEBI:18420"/>
    </ligand>
</feature>
<feature type="binding site" evidence="1">
    <location>
        <position position="311"/>
    </location>
    <ligand>
        <name>Mg(2+)</name>
        <dbReference type="ChEBI" id="CHEBI:18420"/>
    </ligand>
</feature>
<feature type="binding site" evidence="1">
    <location>
        <position position="336"/>
    </location>
    <ligand>
        <name>(2R)-2-phosphoglycerate</name>
        <dbReference type="ChEBI" id="CHEBI:58289"/>
    </ligand>
</feature>
<feature type="binding site" evidence="1">
    <location>
        <position position="365"/>
    </location>
    <ligand>
        <name>(2R)-2-phosphoglycerate</name>
        <dbReference type="ChEBI" id="CHEBI:58289"/>
    </ligand>
</feature>
<feature type="binding site" evidence="1">
    <location>
        <position position="366"/>
    </location>
    <ligand>
        <name>(2R)-2-phosphoglycerate</name>
        <dbReference type="ChEBI" id="CHEBI:58289"/>
    </ligand>
</feature>
<feature type="binding site" evidence="1">
    <location>
        <position position="387"/>
    </location>
    <ligand>
        <name>(2R)-2-phosphoglycerate</name>
        <dbReference type="ChEBI" id="CHEBI:58289"/>
    </ligand>
</feature>